<organism>
    <name type="scientific">Lactobacillus helveticus (strain DPC 4571)</name>
    <dbReference type="NCBI Taxonomy" id="405566"/>
    <lineage>
        <taxon>Bacteria</taxon>
        <taxon>Bacillati</taxon>
        <taxon>Bacillota</taxon>
        <taxon>Bacilli</taxon>
        <taxon>Lactobacillales</taxon>
        <taxon>Lactobacillaceae</taxon>
        <taxon>Lactobacillus</taxon>
    </lineage>
</organism>
<reference key="1">
    <citation type="journal article" date="2008" name="J. Bacteriol.">
        <title>Genome sequence of Lactobacillus helveticus: an organism distinguished by selective gene loss and IS element expansion.</title>
        <authorList>
            <person name="Callanan M."/>
            <person name="Kaleta P."/>
            <person name="O'Callaghan J."/>
            <person name="O'Sullivan O."/>
            <person name="Jordan K."/>
            <person name="McAuliffe O."/>
            <person name="Sangrador-Vegas A."/>
            <person name="Slattery L."/>
            <person name="Fitzgerald G.F."/>
            <person name="Beresford T."/>
            <person name="Ross R.P."/>
        </authorList>
    </citation>
    <scope>NUCLEOTIDE SEQUENCE [LARGE SCALE GENOMIC DNA]</scope>
    <source>
        <strain>DPC 4571</strain>
    </source>
</reference>
<comment type="function">
    <text evidence="1">GTPase that plays an essential role in the late steps of ribosome biogenesis.</text>
</comment>
<comment type="subunit">
    <text evidence="1">Associates with the 50S ribosomal subunit.</text>
</comment>
<comment type="similarity">
    <text evidence="1">Belongs to the TRAFAC class TrmE-Era-EngA-EngB-Septin-like GTPase superfamily. EngA (Der) GTPase family.</text>
</comment>
<keyword id="KW-0342">GTP-binding</keyword>
<keyword id="KW-0547">Nucleotide-binding</keyword>
<keyword id="KW-0677">Repeat</keyword>
<keyword id="KW-0690">Ribosome biogenesis</keyword>
<accession>A8YV35</accession>
<dbReference type="EMBL" id="CP000517">
    <property type="protein sequence ID" value="ABX27123.1"/>
    <property type="molecule type" value="Genomic_DNA"/>
</dbReference>
<dbReference type="RefSeq" id="WP_003626522.1">
    <property type="nucleotide sequence ID" value="NC_010080.1"/>
</dbReference>
<dbReference type="SMR" id="A8YV35"/>
<dbReference type="KEGG" id="lhe:lhv_1062"/>
<dbReference type="eggNOG" id="COG1160">
    <property type="taxonomic scope" value="Bacteria"/>
</dbReference>
<dbReference type="HOGENOM" id="CLU_016077_6_2_9"/>
<dbReference type="Proteomes" id="UP000000790">
    <property type="component" value="Chromosome"/>
</dbReference>
<dbReference type="GO" id="GO:0005525">
    <property type="term" value="F:GTP binding"/>
    <property type="evidence" value="ECO:0007669"/>
    <property type="project" value="UniProtKB-UniRule"/>
</dbReference>
<dbReference type="GO" id="GO:0043022">
    <property type="term" value="F:ribosome binding"/>
    <property type="evidence" value="ECO:0007669"/>
    <property type="project" value="TreeGrafter"/>
</dbReference>
<dbReference type="GO" id="GO:0042254">
    <property type="term" value="P:ribosome biogenesis"/>
    <property type="evidence" value="ECO:0007669"/>
    <property type="project" value="UniProtKB-KW"/>
</dbReference>
<dbReference type="CDD" id="cd01894">
    <property type="entry name" value="EngA1"/>
    <property type="match status" value="1"/>
</dbReference>
<dbReference type="CDD" id="cd01895">
    <property type="entry name" value="EngA2"/>
    <property type="match status" value="1"/>
</dbReference>
<dbReference type="FunFam" id="3.30.300.20:FF:000004">
    <property type="entry name" value="GTPase Der"/>
    <property type="match status" value="1"/>
</dbReference>
<dbReference type="FunFam" id="3.40.50.300:FF:000040">
    <property type="entry name" value="GTPase Der"/>
    <property type="match status" value="1"/>
</dbReference>
<dbReference type="FunFam" id="3.40.50.300:FF:000057">
    <property type="entry name" value="GTPase Der"/>
    <property type="match status" value="1"/>
</dbReference>
<dbReference type="Gene3D" id="3.30.300.20">
    <property type="match status" value="1"/>
</dbReference>
<dbReference type="Gene3D" id="3.40.50.300">
    <property type="entry name" value="P-loop containing nucleotide triphosphate hydrolases"/>
    <property type="match status" value="2"/>
</dbReference>
<dbReference type="HAMAP" id="MF_00195">
    <property type="entry name" value="GTPase_Der"/>
    <property type="match status" value="1"/>
</dbReference>
<dbReference type="InterPro" id="IPR031166">
    <property type="entry name" value="G_ENGA"/>
</dbReference>
<dbReference type="InterPro" id="IPR006073">
    <property type="entry name" value="GTP-bd"/>
</dbReference>
<dbReference type="InterPro" id="IPR016484">
    <property type="entry name" value="GTPase_Der"/>
</dbReference>
<dbReference type="InterPro" id="IPR032859">
    <property type="entry name" value="KH_dom-like"/>
</dbReference>
<dbReference type="InterPro" id="IPR015946">
    <property type="entry name" value="KH_dom-like_a/b"/>
</dbReference>
<dbReference type="InterPro" id="IPR027417">
    <property type="entry name" value="P-loop_NTPase"/>
</dbReference>
<dbReference type="InterPro" id="IPR005225">
    <property type="entry name" value="Small_GTP-bd"/>
</dbReference>
<dbReference type="NCBIfam" id="TIGR03594">
    <property type="entry name" value="GTPase_EngA"/>
    <property type="match status" value="1"/>
</dbReference>
<dbReference type="NCBIfam" id="TIGR00231">
    <property type="entry name" value="small_GTP"/>
    <property type="match status" value="2"/>
</dbReference>
<dbReference type="PANTHER" id="PTHR43834">
    <property type="entry name" value="GTPASE DER"/>
    <property type="match status" value="1"/>
</dbReference>
<dbReference type="PANTHER" id="PTHR43834:SF6">
    <property type="entry name" value="GTPASE DER"/>
    <property type="match status" value="1"/>
</dbReference>
<dbReference type="Pfam" id="PF14714">
    <property type="entry name" value="KH_dom-like"/>
    <property type="match status" value="1"/>
</dbReference>
<dbReference type="Pfam" id="PF01926">
    <property type="entry name" value="MMR_HSR1"/>
    <property type="match status" value="2"/>
</dbReference>
<dbReference type="PIRSF" id="PIRSF006485">
    <property type="entry name" value="GTP-binding_EngA"/>
    <property type="match status" value="1"/>
</dbReference>
<dbReference type="PRINTS" id="PR00326">
    <property type="entry name" value="GTP1OBG"/>
</dbReference>
<dbReference type="SUPFAM" id="SSF52540">
    <property type="entry name" value="P-loop containing nucleoside triphosphate hydrolases"/>
    <property type="match status" value="2"/>
</dbReference>
<dbReference type="PROSITE" id="PS51712">
    <property type="entry name" value="G_ENGA"/>
    <property type="match status" value="2"/>
</dbReference>
<protein>
    <recommendedName>
        <fullName evidence="1">GTPase Der</fullName>
    </recommendedName>
    <alternativeName>
        <fullName evidence="1">GTP-binding protein EngA</fullName>
    </alternativeName>
</protein>
<feature type="chain" id="PRO_1000071703" description="GTPase Der">
    <location>
        <begin position="1"/>
        <end position="435"/>
    </location>
</feature>
<feature type="domain" description="EngA-type G 1">
    <location>
        <begin position="4"/>
        <end position="167"/>
    </location>
</feature>
<feature type="domain" description="EngA-type G 2">
    <location>
        <begin position="175"/>
        <end position="350"/>
    </location>
</feature>
<feature type="domain" description="KH-like" evidence="1">
    <location>
        <begin position="351"/>
        <end position="435"/>
    </location>
</feature>
<feature type="binding site" evidence="1">
    <location>
        <begin position="10"/>
        <end position="17"/>
    </location>
    <ligand>
        <name>GTP</name>
        <dbReference type="ChEBI" id="CHEBI:37565"/>
        <label>1</label>
    </ligand>
</feature>
<feature type="binding site" evidence="1">
    <location>
        <begin position="57"/>
        <end position="61"/>
    </location>
    <ligand>
        <name>GTP</name>
        <dbReference type="ChEBI" id="CHEBI:37565"/>
        <label>1</label>
    </ligand>
</feature>
<feature type="binding site" evidence="1">
    <location>
        <begin position="119"/>
        <end position="122"/>
    </location>
    <ligand>
        <name>GTP</name>
        <dbReference type="ChEBI" id="CHEBI:37565"/>
        <label>1</label>
    </ligand>
</feature>
<feature type="binding site" evidence="1">
    <location>
        <begin position="181"/>
        <end position="188"/>
    </location>
    <ligand>
        <name>GTP</name>
        <dbReference type="ChEBI" id="CHEBI:37565"/>
        <label>2</label>
    </ligand>
</feature>
<feature type="binding site" evidence="1">
    <location>
        <begin position="228"/>
        <end position="232"/>
    </location>
    <ligand>
        <name>GTP</name>
        <dbReference type="ChEBI" id="CHEBI:37565"/>
        <label>2</label>
    </ligand>
</feature>
<feature type="binding site" evidence="1">
    <location>
        <begin position="293"/>
        <end position="296"/>
    </location>
    <ligand>
        <name>GTP</name>
        <dbReference type="ChEBI" id="CHEBI:37565"/>
        <label>2</label>
    </ligand>
</feature>
<proteinExistence type="inferred from homology"/>
<evidence type="ECO:0000255" key="1">
    <source>
        <dbReference type="HAMAP-Rule" id="MF_00195"/>
    </source>
</evidence>
<name>DER_LACH4</name>
<gene>
    <name evidence="1" type="primary">der</name>
    <name type="synonym">engA</name>
    <name type="ordered locus">lhv_1062</name>
</gene>
<sequence length="435" mass="48793">MALPVVAIVGQPNVGKSTLFNRIINQRLAIVEDKPGVTRDRNYAQAEWMGHKFDLIDTGGITWEGGKIEEEIRAQAEIAIEEADVIVMLTNVVNHVTDLDERIAHLLYRTKKPVILAVNKADNPEQRNDIYDFYSLGLGDPIPVSSSHGTGIGDLLDEIVSDFPAEKDSQANDVISFSVIGRPNVGKSSIVNKLLGEDRVIVANEEGTTRDAVDTPFTKDGVKFKVVDTAGIRRRGKVYEKTEKYSVLRAVAAIERSDVVLLVLDASTGIREQDKHVAGYAHEAGRGIIIVVNKWDLPKKNSTSAKEFEREIRAEFQYLDYAPILFVSAKTGQRLDQIPSMVKEVYDNQNQRIQSSVLNDLLLEASKLVPTPMIKGKRLRVYYMTQVSTNPPTFVVFVNDPELMHFSYERFLINQLRQNFDFAGTPIKILPRKRK</sequence>